<sequence>MDRNEGELAQVATRLHMRAPAKVNLSLQVLSRRADGYHDLATHMQKVSLYDELELCLTKQSGVSLVCSDGDIPLDEKNLAVRAALAYLARSSRVGQRGVRISLEKNIPVGAGLGGGSSDAGTVLRGLNQLLDNEFSEEELIEMARPLGADVPFFASEMSAAFATGIGDILQPLESTKEFDFILVNPGIFISTKEIFERFSLTLSPKRNIFARPFRVHERASLLDYMHNDLEEIVSDLCPAIDEMKSLLEANGASAVMMSGSGSTVFGVFQRSVGQKKINQVCKVLSCKYGEKVFAVQAV</sequence>
<comment type="function">
    <text evidence="1">Catalyzes the phosphorylation of the position 2 hydroxy group of 4-diphosphocytidyl-2C-methyl-D-erythritol.</text>
</comment>
<comment type="catalytic activity">
    <reaction evidence="1">
        <text>4-CDP-2-C-methyl-D-erythritol + ATP = 4-CDP-2-C-methyl-D-erythritol 2-phosphate + ADP + H(+)</text>
        <dbReference type="Rhea" id="RHEA:18437"/>
        <dbReference type="ChEBI" id="CHEBI:15378"/>
        <dbReference type="ChEBI" id="CHEBI:30616"/>
        <dbReference type="ChEBI" id="CHEBI:57823"/>
        <dbReference type="ChEBI" id="CHEBI:57919"/>
        <dbReference type="ChEBI" id="CHEBI:456216"/>
        <dbReference type="EC" id="2.7.1.148"/>
    </reaction>
</comment>
<comment type="pathway">
    <text evidence="1">Isoprenoid biosynthesis; isopentenyl diphosphate biosynthesis via DXP pathway; isopentenyl diphosphate from 1-deoxy-D-xylulose 5-phosphate: step 3/6.</text>
</comment>
<comment type="similarity">
    <text evidence="1">Belongs to the GHMP kinase family. IspE subfamily.</text>
</comment>
<accession>Q6AJL6</accession>
<protein>
    <recommendedName>
        <fullName evidence="1">4-diphosphocytidyl-2-C-methyl-D-erythritol kinase</fullName>
        <shortName evidence="1">CMK</shortName>
        <ecNumber evidence="1">2.7.1.148</ecNumber>
    </recommendedName>
    <alternativeName>
        <fullName evidence="1">4-(cytidine-5'-diphospho)-2-C-methyl-D-erythritol kinase</fullName>
    </alternativeName>
</protein>
<reference key="1">
    <citation type="journal article" date="2004" name="Environ. Microbiol.">
        <title>The genome of Desulfotalea psychrophila, a sulfate-reducing bacterium from permanently cold Arctic sediments.</title>
        <authorList>
            <person name="Rabus R."/>
            <person name="Ruepp A."/>
            <person name="Frickey T."/>
            <person name="Rattei T."/>
            <person name="Fartmann B."/>
            <person name="Stark M."/>
            <person name="Bauer M."/>
            <person name="Zibat A."/>
            <person name="Lombardot T."/>
            <person name="Becker I."/>
            <person name="Amann J."/>
            <person name="Gellner K."/>
            <person name="Teeling H."/>
            <person name="Leuschner W.D."/>
            <person name="Gloeckner F.-O."/>
            <person name="Lupas A.N."/>
            <person name="Amann R."/>
            <person name="Klenk H.-P."/>
        </authorList>
    </citation>
    <scope>NUCLEOTIDE SEQUENCE [LARGE SCALE GENOMIC DNA]</scope>
    <source>
        <strain>DSM 12343 / LSv54</strain>
    </source>
</reference>
<keyword id="KW-0067">ATP-binding</keyword>
<keyword id="KW-0414">Isoprene biosynthesis</keyword>
<keyword id="KW-0418">Kinase</keyword>
<keyword id="KW-0547">Nucleotide-binding</keyword>
<keyword id="KW-1185">Reference proteome</keyword>
<keyword id="KW-0808">Transferase</keyword>
<gene>
    <name evidence="1" type="primary">ispE</name>
    <name type="ordered locus">DP2735</name>
</gene>
<dbReference type="EC" id="2.7.1.148" evidence="1"/>
<dbReference type="EMBL" id="CR522870">
    <property type="protein sequence ID" value="CAG37464.1"/>
    <property type="molecule type" value="Genomic_DNA"/>
</dbReference>
<dbReference type="RefSeq" id="WP_011189976.1">
    <property type="nucleotide sequence ID" value="NC_006138.1"/>
</dbReference>
<dbReference type="SMR" id="Q6AJL6"/>
<dbReference type="STRING" id="177439.DP2735"/>
<dbReference type="KEGG" id="dps:DP2735"/>
<dbReference type="eggNOG" id="COG1947">
    <property type="taxonomic scope" value="Bacteria"/>
</dbReference>
<dbReference type="HOGENOM" id="CLU_053057_1_1_7"/>
<dbReference type="OrthoDB" id="9809438at2"/>
<dbReference type="UniPathway" id="UPA00056">
    <property type="reaction ID" value="UER00094"/>
</dbReference>
<dbReference type="Proteomes" id="UP000000602">
    <property type="component" value="Chromosome"/>
</dbReference>
<dbReference type="GO" id="GO:0050515">
    <property type="term" value="F:4-(cytidine 5'-diphospho)-2-C-methyl-D-erythritol kinase activity"/>
    <property type="evidence" value="ECO:0007669"/>
    <property type="project" value="UniProtKB-UniRule"/>
</dbReference>
<dbReference type="GO" id="GO:0005524">
    <property type="term" value="F:ATP binding"/>
    <property type="evidence" value="ECO:0007669"/>
    <property type="project" value="UniProtKB-UniRule"/>
</dbReference>
<dbReference type="GO" id="GO:0019288">
    <property type="term" value="P:isopentenyl diphosphate biosynthetic process, methylerythritol 4-phosphate pathway"/>
    <property type="evidence" value="ECO:0007669"/>
    <property type="project" value="UniProtKB-UniRule"/>
</dbReference>
<dbReference type="GO" id="GO:0016114">
    <property type="term" value="P:terpenoid biosynthetic process"/>
    <property type="evidence" value="ECO:0007669"/>
    <property type="project" value="InterPro"/>
</dbReference>
<dbReference type="Gene3D" id="3.30.230.10">
    <property type="match status" value="1"/>
</dbReference>
<dbReference type="Gene3D" id="3.30.70.890">
    <property type="entry name" value="GHMP kinase, C-terminal domain"/>
    <property type="match status" value="1"/>
</dbReference>
<dbReference type="HAMAP" id="MF_00061">
    <property type="entry name" value="IspE"/>
    <property type="match status" value="1"/>
</dbReference>
<dbReference type="InterPro" id="IPR013750">
    <property type="entry name" value="GHMP_kinase_C_dom"/>
</dbReference>
<dbReference type="InterPro" id="IPR036554">
    <property type="entry name" value="GHMP_kinase_C_sf"/>
</dbReference>
<dbReference type="InterPro" id="IPR006204">
    <property type="entry name" value="GHMP_kinase_N_dom"/>
</dbReference>
<dbReference type="InterPro" id="IPR004424">
    <property type="entry name" value="IspE"/>
</dbReference>
<dbReference type="InterPro" id="IPR020568">
    <property type="entry name" value="Ribosomal_Su5_D2-typ_SF"/>
</dbReference>
<dbReference type="InterPro" id="IPR014721">
    <property type="entry name" value="Ribsml_uS5_D2-typ_fold_subgr"/>
</dbReference>
<dbReference type="NCBIfam" id="TIGR00154">
    <property type="entry name" value="ispE"/>
    <property type="match status" value="1"/>
</dbReference>
<dbReference type="NCBIfam" id="NF011202">
    <property type="entry name" value="PRK14608.1"/>
    <property type="match status" value="1"/>
</dbReference>
<dbReference type="PANTHER" id="PTHR43527">
    <property type="entry name" value="4-DIPHOSPHOCYTIDYL-2-C-METHYL-D-ERYTHRITOL KINASE, CHLOROPLASTIC"/>
    <property type="match status" value="1"/>
</dbReference>
<dbReference type="PANTHER" id="PTHR43527:SF2">
    <property type="entry name" value="4-DIPHOSPHOCYTIDYL-2-C-METHYL-D-ERYTHRITOL KINASE, CHLOROPLASTIC"/>
    <property type="match status" value="1"/>
</dbReference>
<dbReference type="Pfam" id="PF08544">
    <property type="entry name" value="GHMP_kinases_C"/>
    <property type="match status" value="1"/>
</dbReference>
<dbReference type="Pfam" id="PF00288">
    <property type="entry name" value="GHMP_kinases_N"/>
    <property type="match status" value="1"/>
</dbReference>
<dbReference type="PIRSF" id="PIRSF010376">
    <property type="entry name" value="IspE"/>
    <property type="match status" value="1"/>
</dbReference>
<dbReference type="SUPFAM" id="SSF55060">
    <property type="entry name" value="GHMP Kinase, C-terminal domain"/>
    <property type="match status" value="1"/>
</dbReference>
<dbReference type="SUPFAM" id="SSF54211">
    <property type="entry name" value="Ribosomal protein S5 domain 2-like"/>
    <property type="match status" value="1"/>
</dbReference>
<evidence type="ECO:0000255" key="1">
    <source>
        <dbReference type="HAMAP-Rule" id="MF_00061"/>
    </source>
</evidence>
<proteinExistence type="inferred from homology"/>
<name>ISPE_DESPS</name>
<organism>
    <name type="scientific">Desulfotalea psychrophila (strain LSv54 / DSM 12343)</name>
    <dbReference type="NCBI Taxonomy" id="177439"/>
    <lineage>
        <taxon>Bacteria</taxon>
        <taxon>Pseudomonadati</taxon>
        <taxon>Thermodesulfobacteriota</taxon>
        <taxon>Desulfobulbia</taxon>
        <taxon>Desulfobulbales</taxon>
        <taxon>Desulfocapsaceae</taxon>
        <taxon>Desulfotalea</taxon>
    </lineage>
</organism>
<feature type="chain" id="PRO_0000235087" description="4-diphosphocytidyl-2-C-methyl-D-erythritol kinase">
    <location>
        <begin position="1"/>
        <end position="299"/>
    </location>
</feature>
<feature type="active site" evidence="1">
    <location>
        <position position="22"/>
    </location>
</feature>
<feature type="active site" evidence="1">
    <location>
        <position position="150"/>
    </location>
</feature>
<feature type="binding site" evidence="1">
    <location>
        <begin position="108"/>
        <end position="118"/>
    </location>
    <ligand>
        <name>ATP</name>
        <dbReference type="ChEBI" id="CHEBI:30616"/>
    </ligand>
</feature>